<feature type="chain" id="PRO_0000127871" description="Uncharacterized protein AF_0405">
    <location>
        <begin position="1"/>
        <end position="83"/>
    </location>
</feature>
<feature type="region of interest" description="Disordered" evidence="1">
    <location>
        <begin position="57"/>
        <end position="83"/>
    </location>
</feature>
<evidence type="ECO:0000256" key="1">
    <source>
        <dbReference type="SAM" id="MobiDB-lite"/>
    </source>
</evidence>
<dbReference type="EMBL" id="AE000782">
    <property type="protein sequence ID" value="AAB90835.1"/>
    <property type="molecule type" value="Genomic_DNA"/>
</dbReference>
<dbReference type="PIR" id="E69300">
    <property type="entry name" value="E69300"/>
</dbReference>
<dbReference type="RefSeq" id="WP_010877912.1">
    <property type="nucleotide sequence ID" value="NC_000917.1"/>
</dbReference>
<dbReference type="STRING" id="224325.AF_0405"/>
<dbReference type="PaxDb" id="224325-AF_0405"/>
<dbReference type="EnsemblBacteria" id="AAB90835">
    <property type="protein sequence ID" value="AAB90835"/>
    <property type="gene ID" value="AF_0405"/>
</dbReference>
<dbReference type="GeneID" id="1483621"/>
<dbReference type="KEGG" id="afu:AF_0405"/>
<dbReference type="eggNOG" id="arCOG01588">
    <property type="taxonomic scope" value="Archaea"/>
</dbReference>
<dbReference type="HOGENOM" id="CLU_2565531_0_0_2"/>
<dbReference type="OrthoDB" id="129238at2157"/>
<dbReference type="Proteomes" id="UP000002199">
    <property type="component" value="Chromosome"/>
</dbReference>
<proteinExistence type="predicted"/>
<gene>
    <name type="ordered locus">AF_0405</name>
</gene>
<sequence>MAVKLIRCPSCGEEIEITDLYEGVEIQCSLCNSIMVYQEGKLLLLDTNEEFDLDELESVEEEEEFEDYDEFEEEEEYYYDDEY</sequence>
<name>Y405_ARCFU</name>
<keyword id="KW-1185">Reference proteome</keyword>
<organism>
    <name type="scientific">Archaeoglobus fulgidus (strain ATCC 49558 / DSM 4304 / JCM 9628 / NBRC 100126 / VC-16)</name>
    <dbReference type="NCBI Taxonomy" id="224325"/>
    <lineage>
        <taxon>Archaea</taxon>
        <taxon>Methanobacteriati</taxon>
        <taxon>Methanobacteriota</taxon>
        <taxon>Archaeoglobi</taxon>
        <taxon>Archaeoglobales</taxon>
        <taxon>Archaeoglobaceae</taxon>
        <taxon>Archaeoglobus</taxon>
    </lineage>
</organism>
<accession>O29842</accession>
<protein>
    <recommendedName>
        <fullName>Uncharacterized protein AF_0405</fullName>
    </recommendedName>
</protein>
<reference key="1">
    <citation type="journal article" date="1997" name="Nature">
        <title>The complete genome sequence of the hyperthermophilic, sulphate-reducing archaeon Archaeoglobus fulgidus.</title>
        <authorList>
            <person name="Klenk H.-P."/>
            <person name="Clayton R.A."/>
            <person name="Tomb J.-F."/>
            <person name="White O."/>
            <person name="Nelson K.E."/>
            <person name="Ketchum K.A."/>
            <person name="Dodson R.J."/>
            <person name="Gwinn M.L."/>
            <person name="Hickey E.K."/>
            <person name="Peterson J.D."/>
            <person name="Richardson D.L."/>
            <person name="Kerlavage A.R."/>
            <person name="Graham D.E."/>
            <person name="Kyrpides N.C."/>
            <person name="Fleischmann R.D."/>
            <person name="Quackenbush J."/>
            <person name="Lee N.H."/>
            <person name="Sutton G.G."/>
            <person name="Gill S.R."/>
            <person name="Kirkness E.F."/>
            <person name="Dougherty B.A."/>
            <person name="McKenney K."/>
            <person name="Adams M.D."/>
            <person name="Loftus B.J."/>
            <person name="Peterson S.N."/>
            <person name="Reich C.I."/>
            <person name="McNeil L.K."/>
            <person name="Badger J.H."/>
            <person name="Glodek A."/>
            <person name="Zhou L."/>
            <person name="Overbeek R."/>
            <person name="Gocayne J.D."/>
            <person name="Weidman J.F."/>
            <person name="McDonald L.A."/>
            <person name="Utterback T.R."/>
            <person name="Cotton M.D."/>
            <person name="Spriggs T."/>
            <person name="Artiach P."/>
            <person name="Kaine B.P."/>
            <person name="Sykes S.M."/>
            <person name="Sadow P.W."/>
            <person name="D'Andrea K.P."/>
            <person name="Bowman C."/>
            <person name="Fujii C."/>
            <person name="Garland S.A."/>
            <person name="Mason T.M."/>
            <person name="Olsen G.J."/>
            <person name="Fraser C.M."/>
            <person name="Smith H.O."/>
            <person name="Woese C.R."/>
            <person name="Venter J.C."/>
        </authorList>
    </citation>
    <scope>NUCLEOTIDE SEQUENCE [LARGE SCALE GENOMIC DNA]</scope>
    <source>
        <strain>ATCC 49558 / DSM 4304 / JCM 9628 / NBRC 100126 / VC-16</strain>
    </source>
</reference>